<protein>
    <recommendedName>
        <fullName>Protein phosphatase CheZ</fullName>
        <ecNumber>3.1.3.-</ecNumber>
    </recommendedName>
    <alternativeName>
        <fullName>Chemotaxis protein CheZ</fullName>
    </alternativeName>
</protein>
<keyword id="KW-0145">Chemotaxis</keyword>
<keyword id="KW-0963">Cytoplasm</keyword>
<keyword id="KW-0283">Flagellar rotation</keyword>
<keyword id="KW-0378">Hydrolase</keyword>
<keyword id="KW-0904">Protein phosphatase</keyword>
<keyword id="KW-1185">Reference proteome</keyword>
<evidence type="ECO:0000250" key="1"/>
<evidence type="ECO:0000256" key="2">
    <source>
        <dbReference type="SAM" id="MobiDB-lite"/>
    </source>
</evidence>
<evidence type="ECO:0000305" key="3"/>
<sequence>MDSSQTSLGEFESTLKKHAQELVESLERGRFGEAVQLIHELNQTRDRGLYQEVGKLTRELHSAIVSFQIDPTMPQAEEVSQITDATERLSYVVKLTEGAANRTMDLVEESTPVLNELANEAKALSTDWQRFMRREVAAPEFRDLVKRVDSFLTHSAEGNRKVSGHLNDILLAQDYQDLTGQVIKRVTTLVTEVESNLLKLVLMASQVDRFAGIKHDHDQLRAEKDREKHPTRGEGPQIHADKREDVVSGQDDVDDLLSSLGF</sequence>
<feature type="chain" id="PRO_0000410781" description="Protein phosphatase CheZ">
    <location>
        <begin position="1"/>
        <end position="262"/>
    </location>
</feature>
<feature type="region of interest" description="Disordered" evidence="2">
    <location>
        <begin position="218"/>
        <end position="250"/>
    </location>
</feature>
<feature type="compositionally biased region" description="Basic and acidic residues" evidence="2">
    <location>
        <begin position="218"/>
        <end position="232"/>
    </location>
</feature>
<feature type="site" description="Enhances dephosphorylation of CheY-P" evidence="1">
    <location>
        <position position="181"/>
    </location>
</feature>
<organism>
    <name type="scientific">Pseudomonas putida (strain ATCC 47054 / DSM 6125 / CFBP 8728 / NCIMB 11950 / KT2440)</name>
    <dbReference type="NCBI Taxonomy" id="160488"/>
    <lineage>
        <taxon>Bacteria</taxon>
        <taxon>Pseudomonadati</taxon>
        <taxon>Pseudomonadota</taxon>
        <taxon>Gammaproteobacteria</taxon>
        <taxon>Pseudomonadales</taxon>
        <taxon>Pseudomonadaceae</taxon>
        <taxon>Pseudomonas</taxon>
    </lineage>
</organism>
<accession>Q88EW3</accession>
<name>CHEZ_PSEPK</name>
<comment type="function">
    <text evidence="1">Plays an important role in bacterial chemotaxis signal transduction pathway by accelerating the dephosphorylation of phosphorylated CheY (CheY-P).</text>
</comment>
<comment type="subunit">
    <text evidence="1">Homodimer.</text>
</comment>
<comment type="subcellular location">
    <subcellularLocation>
        <location evidence="1">Cytoplasm</location>
    </subcellularLocation>
</comment>
<comment type="similarity">
    <text evidence="3">Belongs to the CheZ family.</text>
</comment>
<dbReference type="EC" id="3.1.3.-"/>
<dbReference type="EMBL" id="AE015451">
    <property type="protein sequence ID" value="AAN69918.1"/>
    <property type="molecule type" value="Genomic_DNA"/>
</dbReference>
<dbReference type="RefSeq" id="NP_746454.1">
    <property type="nucleotide sequence ID" value="NC_002947.4"/>
</dbReference>
<dbReference type="RefSeq" id="WP_010955069.1">
    <property type="nucleotide sequence ID" value="NZ_CP169744.1"/>
</dbReference>
<dbReference type="SMR" id="Q88EW3"/>
<dbReference type="STRING" id="160488.PP_4339"/>
<dbReference type="PaxDb" id="160488-PP_4339"/>
<dbReference type="KEGG" id="ppu:PP_4339"/>
<dbReference type="PATRIC" id="fig|160488.4.peg.4613"/>
<dbReference type="eggNOG" id="COG3143">
    <property type="taxonomic scope" value="Bacteria"/>
</dbReference>
<dbReference type="HOGENOM" id="CLU_080718_0_0_6"/>
<dbReference type="OrthoDB" id="9773007at2"/>
<dbReference type="PhylomeDB" id="Q88EW3"/>
<dbReference type="BioCyc" id="PPUT160488:G1G01-4617-MONOMER"/>
<dbReference type="Proteomes" id="UP000000556">
    <property type="component" value="Chromosome"/>
</dbReference>
<dbReference type="GO" id="GO:0009288">
    <property type="term" value="C:bacterial-type flagellum"/>
    <property type="evidence" value="ECO:0007669"/>
    <property type="project" value="InterPro"/>
</dbReference>
<dbReference type="GO" id="GO:0005737">
    <property type="term" value="C:cytoplasm"/>
    <property type="evidence" value="ECO:0007669"/>
    <property type="project" value="UniProtKB-SubCell"/>
</dbReference>
<dbReference type="GO" id="GO:0004721">
    <property type="term" value="F:phosphoprotein phosphatase activity"/>
    <property type="evidence" value="ECO:0007669"/>
    <property type="project" value="UniProtKB-KW"/>
</dbReference>
<dbReference type="GO" id="GO:0097588">
    <property type="term" value="P:archaeal or bacterial-type flagellum-dependent cell motility"/>
    <property type="evidence" value="ECO:0007669"/>
    <property type="project" value="UniProtKB-KW"/>
</dbReference>
<dbReference type="GO" id="GO:0006935">
    <property type="term" value="P:chemotaxis"/>
    <property type="evidence" value="ECO:0007669"/>
    <property type="project" value="UniProtKB-KW"/>
</dbReference>
<dbReference type="GO" id="GO:0050920">
    <property type="term" value="P:regulation of chemotaxis"/>
    <property type="evidence" value="ECO:0007669"/>
    <property type="project" value="InterPro"/>
</dbReference>
<dbReference type="Gene3D" id="1.10.287.500">
    <property type="entry name" value="Helix hairpin bin"/>
    <property type="match status" value="1"/>
</dbReference>
<dbReference type="InterPro" id="IPR007439">
    <property type="entry name" value="Chemotax_Pase_CheZ"/>
</dbReference>
<dbReference type="InterPro" id="IPR050992">
    <property type="entry name" value="CheZ_family_phosphatases"/>
</dbReference>
<dbReference type="PANTHER" id="PTHR43693">
    <property type="entry name" value="PROTEIN PHOSPHATASE CHEZ"/>
    <property type="match status" value="1"/>
</dbReference>
<dbReference type="PANTHER" id="PTHR43693:SF1">
    <property type="entry name" value="PROTEIN PHOSPHATASE CHEZ"/>
    <property type="match status" value="1"/>
</dbReference>
<dbReference type="Pfam" id="PF04344">
    <property type="entry name" value="CheZ"/>
    <property type="match status" value="1"/>
</dbReference>
<dbReference type="PIRSF" id="PIRSF002884">
    <property type="entry name" value="CheZ"/>
    <property type="match status" value="1"/>
</dbReference>
<dbReference type="SUPFAM" id="SSF75708">
    <property type="entry name" value="Chemotaxis phosphatase CheZ"/>
    <property type="match status" value="1"/>
</dbReference>
<proteinExistence type="inferred from homology"/>
<gene>
    <name type="primary">cheZ</name>
    <name type="ordered locus">PP_4339</name>
</gene>
<reference key="1">
    <citation type="journal article" date="2002" name="Environ. Microbiol.">
        <title>Complete genome sequence and comparative analysis of the metabolically versatile Pseudomonas putida KT2440.</title>
        <authorList>
            <person name="Nelson K.E."/>
            <person name="Weinel C."/>
            <person name="Paulsen I.T."/>
            <person name="Dodson R.J."/>
            <person name="Hilbert H."/>
            <person name="Martins dos Santos V.A.P."/>
            <person name="Fouts D.E."/>
            <person name="Gill S.R."/>
            <person name="Pop M."/>
            <person name="Holmes M."/>
            <person name="Brinkac L.M."/>
            <person name="Beanan M.J."/>
            <person name="DeBoy R.T."/>
            <person name="Daugherty S.C."/>
            <person name="Kolonay J.F."/>
            <person name="Madupu R."/>
            <person name="Nelson W.C."/>
            <person name="White O."/>
            <person name="Peterson J.D."/>
            <person name="Khouri H.M."/>
            <person name="Hance I."/>
            <person name="Chris Lee P."/>
            <person name="Holtzapple E.K."/>
            <person name="Scanlan D."/>
            <person name="Tran K."/>
            <person name="Moazzez A."/>
            <person name="Utterback T.R."/>
            <person name="Rizzo M."/>
            <person name="Lee K."/>
            <person name="Kosack D."/>
            <person name="Moestl D."/>
            <person name="Wedler H."/>
            <person name="Lauber J."/>
            <person name="Stjepandic D."/>
            <person name="Hoheisel J."/>
            <person name="Straetz M."/>
            <person name="Heim S."/>
            <person name="Kiewitz C."/>
            <person name="Eisen J.A."/>
            <person name="Timmis K.N."/>
            <person name="Duesterhoeft A."/>
            <person name="Tuemmler B."/>
            <person name="Fraser C.M."/>
        </authorList>
    </citation>
    <scope>NUCLEOTIDE SEQUENCE [LARGE SCALE GENOMIC DNA]</scope>
    <source>
        <strain>ATCC 47054 / DSM 6125 / CFBP 8728 / NCIMB 11950 / KT2440</strain>
    </source>
</reference>